<accession>Q8EYP6</accession>
<keyword id="KW-0067">ATP-binding</keyword>
<keyword id="KW-0173">Coenzyme A biosynthesis</keyword>
<keyword id="KW-0963">Cytoplasm</keyword>
<keyword id="KW-0460">Magnesium</keyword>
<keyword id="KW-0547">Nucleotide-binding</keyword>
<keyword id="KW-0548">Nucleotidyltransferase</keyword>
<keyword id="KW-1185">Reference proteome</keyword>
<keyword id="KW-0808">Transferase</keyword>
<proteinExistence type="inferred from homology"/>
<dbReference type="EC" id="2.7.7.3" evidence="1"/>
<dbReference type="EMBL" id="AE010300">
    <property type="protein sequence ID" value="AAN51365.1"/>
    <property type="molecule type" value="Genomic_DNA"/>
</dbReference>
<dbReference type="RefSeq" id="NP_714347.1">
    <property type="nucleotide sequence ID" value="NC_004342.2"/>
</dbReference>
<dbReference type="RefSeq" id="WP_000681221.1">
    <property type="nucleotide sequence ID" value="NC_004342.2"/>
</dbReference>
<dbReference type="SMR" id="Q8EYP6"/>
<dbReference type="FunCoup" id="Q8EYP6">
    <property type="interactions" value="370"/>
</dbReference>
<dbReference type="STRING" id="189518.LA_4167"/>
<dbReference type="PaxDb" id="189518-LA_4167"/>
<dbReference type="EnsemblBacteria" id="AAN51365">
    <property type="protein sequence ID" value="AAN51365"/>
    <property type="gene ID" value="LA_4167"/>
</dbReference>
<dbReference type="GeneID" id="61143191"/>
<dbReference type="KEGG" id="lil:LA_4167"/>
<dbReference type="PATRIC" id="fig|189518.3.peg.4138"/>
<dbReference type="HOGENOM" id="CLU_100149_0_1_12"/>
<dbReference type="InParanoid" id="Q8EYP6"/>
<dbReference type="OrthoDB" id="9806661at2"/>
<dbReference type="UniPathway" id="UPA00241">
    <property type="reaction ID" value="UER00355"/>
</dbReference>
<dbReference type="PRO" id="PR:Q8EYP6"/>
<dbReference type="Proteomes" id="UP000001408">
    <property type="component" value="Chromosome I"/>
</dbReference>
<dbReference type="GO" id="GO:0005737">
    <property type="term" value="C:cytoplasm"/>
    <property type="evidence" value="ECO:0007669"/>
    <property type="project" value="UniProtKB-SubCell"/>
</dbReference>
<dbReference type="GO" id="GO:0005524">
    <property type="term" value="F:ATP binding"/>
    <property type="evidence" value="ECO:0007669"/>
    <property type="project" value="UniProtKB-KW"/>
</dbReference>
<dbReference type="GO" id="GO:0004595">
    <property type="term" value="F:pantetheine-phosphate adenylyltransferase activity"/>
    <property type="evidence" value="ECO:0000318"/>
    <property type="project" value="GO_Central"/>
</dbReference>
<dbReference type="GO" id="GO:0015937">
    <property type="term" value="P:coenzyme A biosynthetic process"/>
    <property type="evidence" value="ECO:0000318"/>
    <property type="project" value="GO_Central"/>
</dbReference>
<dbReference type="CDD" id="cd02163">
    <property type="entry name" value="PPAT"/>
    <property type="match status" value="1"/>
</dbReference>
<dbReference type="Gene3D" id="3.40.50.620">
    <property type="entry name" value="HUPs"/>
    <property type="match status" value="1"/>
</dbReference>
<dbReference type="HAMAP" id="MF_00151">
    <property type="entry name" value="PPAT_bact"/>
    <property type="match status" value="1"/>
</dbReference>
<dbReference type="InterPro" id="IPR004821">
    <property type="entry name" value="Cyt_trans-like"/>
</dbReference>
<dbReference type="InterPro" id="IPR001980">
    <property type="entry name" value="PPAT"/>
</dbReference>
<dbReference type="InterPro" id="IPR014729">
    <property type="entry name" value="Rossmann-like_a/b/a_fold"/>
</dbReference>
<dbReference type="NCBIfam" id="TIGR01510">
    <property type="entry name" value="coaD_prev_kdtB"/>
    <property type="match status" value="1"/>
</dbReference>
<dbReference type="NCBIfam" id="TIGR00125">
    <property type="entry name" value="cyt_tran_rel"/>
    <property type="match status" value="1"/>
</dbReference>
<dbReference type="PANTHER" id="PTHR21342">
    <property type="entry name" value="PHOSPHOPANTETHEINE ADENYLYLTRANSFERASE"/>
    <property type="match status" value="1"/>
</dbReference>
<dbReference type="PANTHER" id="PTHR21342:SF1">
    <property type="entry name" value="PHOSPHOPANTETHEINE ADENYLYLTRANSFERASE"/>
    <property type="match status" value="1"/>
</dbReference>
<dbReference type="Pfam" id="PF01467">
    <property type="entry name" value="CTP_transf_like"/>
    <property type="match status" value="1"/>
</dbReference>
<dbReference type="PRINTS" id="PR01020">
    <property type="entry name" value="LPSBIOSNTHSS"/>
</dbReference>
<dbReference type="SUPFAM" id="SSF52374">
    <property type="entry name" value="Nucleotidylyl transferase"/>
    <property type="match status" value="1"/>
</dbReference>
<name>COAD_LEPIN</name>
<reference key="1">
    <citation type="journal article" date="2003" name="Nature">
        <title>Unique physiological and pathogenic features of Leptospira interrogans revealed by whole-genome sequencing.</title>
        <authorList>
            <person name="Ren S.-X."/>
            <person name="Fu G."/>
            <person name="Jiang X.-G."/>
            <person name="Zeng R."/>
            <person name="Miao Y.-G."/>
            <person name="Xu H."/>
            <person name="Zhang Y.-X."/>
            <person name="Xiong H."/>
            <person name="Lu G."/>
            <person name="Lu L.-F."/>
            <person name="Jiang H.-Q."/>
            <person name="Jia J."/>
            <person name="Tu Y.-F."/>
            <person name="Jiang J.-X."/>
            <person name="Gu W.-Y."/>
            <person name="Zhang Y.-Q."/>
            <person name="Cai Z."/>
            <person name="Sheng H.-H."/>
            <person name="Yin H.-F."/>
            <person name="Zhang Y."/>
            <person name="Zhu G.-F."/>
            <person name="Wan M."/>
            <person name="Huang H.-L."/>
            <person name="Qian Z."/>
            <person name="Wang S.-Y."/>
            <person name="Ma W."/>
            <person name="Yao Z.-J."/>
            <person name="Shen Y."/>
            <person name="Qiang B.-Q."/>
            <person name="Xia Q.-C."/>
            <person name="Guo X.-K."/>
            <person name="Danchin A."/>
            <person name="Saint Girons I."/>
            <person name="Somerville R.L."/>
            <person name="Wen Y.-M."/>
            <person name="Shi M.-H."/>
            <person name="Chen Z."/>
            <person name="Xu J.-G."/>
            <person name="Zhao G.-P."/>
        </authorList>
    </citation>
    <scope>NUCLEOTIDE SEQUENCE [LARGE SCALE GENOMIC DNA]</scope>
    <source>
        <strain>56601</strain>
    </source>
</reference>
<gene>
    <name evidence="1" type="primary">coaD</name>
    <name type="ordered locus">LA_4167</name>
</gene>
<evidence type="ECO:0000255" key="1">
    <source>
        <dbReference type="HAMAP-Rule" id="MF_00151"/>
    </source>
</evidence>
<feature type="chain" id="PRO_0000156229" description="Phosphopantetheine adenylyltransferase">
    <location>
        <begin position="1"/>
        <end position="160"/>
    </location>
</feature>
<feature type="binding site" evidence="1">
    <location>
        <begin position="10"/>
        <end position="11"/>
    </location>
    <ligand>
        <name>ATP</name>
        <dbReference type="ChEBI" id="CHEBI:30616"/>
    </ligand>
</feature>
<feature type="binding site" evidence="1">
    <location>
        <position position="10"/>
    </location>
    <ligand>
        <name>substrate</name>
    </ligand>
</feature>
<feature type="binding site" evidence="1">
    <location>
        <position position="18"/>
    </location>
    <ligand>
        <name>ATP</name>
        <dbReference type="ChEBI" id="CHEBI:30616"/>
    </ligand>
</feature>
<feature type="binding site" evidence="1">
    <location>
        <position position="42"/>
    </location>
    <ligand>
        <name>substrate</name>
    </ligand>
</feature>
<feature type="binding site" evidence="1">
    <location>
        <position position="74"/>
    </location>
    <ligand>
        <name>substrate</name>
    </ligand>
</feature>
<feature type="binding site" evidence="1">
    <location>
        <position position="88"/>
    </location>
    <ligand>
        <name>substrate</name>
    </ligand>
</feature>
<feature type="binding site" evidence="1">
    <location>
        <begin position="89"/>
        <end position="91"/>
    </location>
    <ligand>
        <name>ATP</name>
        <dbReference type="ChEBI" id="CHEBI:30616"/>
    </ligand>
</feature>
<feature type="binding site" evidence="1">
    <location>
        <position position="99"/>
    </location>
    <ligand>
        <name>ATP</name>
        <dbReference type="ChEBI" id="CHEBI:30616"/>
    </ligand>
</feature>
<feature type="binding site" evidence="1">
    <location>
        <begin position="124"/>
        <end position="130"/>
    </location>
    <ligand>
        <name>ATP</name>
        <dbReference type="ChEBI" id="CHEBI:30616"/>
    </ligand>
</feature>
<feature type="site" description="Transition state stabilizer" evidence="1">
    <location>
        <position position="18"/>
    </location>
</feature>
<sequence>MKHLAIYPGSFDPLTKGHLDILQRSLGLFDKVIIAIAVNSNKSTLFSIEERLGFIREVTKGMKGLEIDTFQGLTVDYCNKVGANSIIRGLRAVTDFDYEYAISLMNKKLAPNVETVFLMSSGEYSFISSTIVKEVARHGRDVSNQVPEIVSKALLKKLSQ</sequence>
<comment type="function">
    <text evidence="1">Reversibly transfers an adenylyl group from ATP to 4'-phosphopantetheine, yielding dephospho-CoA (dPCoA) and pyrophosphate.</text>
</comment>
<comment type="catalytic activity">
    <reaction evidence="1">
        <text>(R)-4'-phosphopantetheine + ATP + H(+) = 3'-dephospho-CoA + diphosphate</text>
        <dbReference type="Rhea" id="RHEA:19801"/>
        <dbReference type="ChEBI" id="CHEBI:15378"/>
        <dbReference type="ChEBI" id="CHEBI:30616"/>
        <dbReference type="ChEBI" id="CHEBI:33019"/>
        <dbReference type="ChEBI" id="CHEBI:57328"/>
        <dbReference type="ChEBI" id="CHEBI:61723"/>
        <dbReference type="EC" id="2.7.7.3"/>
    </reaction>
</comment>
<comment type="cofactor">
    <cofactor evidence="1">
        <name>Mg(2+)</name>
        <dbReference type="ChEBI" id="CHEBI:18420"/>
    </cofactor>
</comment>
<comment type="pathway">
    <text evidence="1">Cofactor biosynthesis; coenzyme A biosynthesis; CoA from (R)-pantothenate: step 4/5.</text>
</comment>
<comment type="subunit">
    <text evidence="1">Homohexamer.</text>
</comment>
<comment type="subcellular location">
    <subcellularLocation>
        <location evidence="1">Cytoplasm</location>
    </subcellularLocation>
</comment>
<comment type="similarity">
    <text evidence="1">Belongs to the bacterial CoaD family.</text>
</comment>
<protein>
    <recommendedName>
        <fullName evidence="1">Phosphopantetheine adenylyltransferase</fullName>
        <ecNumber evidence="1">2.7.7.3</ecNumber>
    </recommendedName>
    <alternativeName>
        <fullName evidence="1">Dephospho-CoA pyrophosphorylase</fullName>
    </alternativeName>
    <alternativeName>
        <fullName evidence="1">Pantetheine-phosphate adenylyltransferase</fullName>
        <shortName evidence="1">PPAT</shortName>
    </alternativeName>
</protein>
<organism>
    <name type="scientific">Leptospira interrogans serogroup Icterohaemorrhagiae serovar Lai (strain 56601)</name>
    <dbReference type="NCBI Taxonomy" id="189518"/>
    <lineage>
        <taxon>Bacteria</taxon>
        <taxon>Pseudomonadati</taxon>
        <taxon>Spirochaetota</taxon>
        <taxon>Spirochaetia</taxon>
        <taxon>Leptospirales</taxon>
        <taxon>Leptospiraceae</taxon>
        <taxon>Leptospira</taxon>
    </lineage>
</organism>